<sequence>MTIGLVGRKVGMTRIFTEDGVSIPVTVIEVEANRVTQVKSVETDGYNAIQVTTGAKKASRVTKPEAGHFAKAGVEAGRGLWEFRLNNGETFTVGSELKVDLLADVKLVDVTGTSKGKGFAGTVKRWNFRTQDMTHGNSLSHRVPGSIGQNQTPGRVFKGKKMAGHMGAERVTTQNLELVRVDAERNLLLIKGAVPGATNGNVIVKPAVKA</sequence>
<keyword id="KW-0488">Methylation</keyword>
<keyword id="KW-1185">Reference proteome</keyword>
<keyword id="KW-0687">Ribonucleoprotein</keyword>
<keyword id="KW-0689">Ribosomal protein</keyword>
<keyword id="KW-0694">RNA-binding</keyword>
<keyword id="KW-0699">rRNA-binding</keyword>
<protein>
    <recommendedName>
        <fullName evidence="1">Large ribosomal subunit protein uL3</fullName>
    </recommendedName>
    <alternativeName>
        <fullName evidence="2">50S ribosomal protein L3</fullName>
    </alternativeName>
</protein>
<gene>
    <name evidence="1" type="primary">rplC</name>
    <name type="ordered locus">AHA_0309</name>
</gene>
<accession>A0KF21</accession>
<dbReference type="EMBL" id="CP000462">
    <property type="protein sequence ID" value="ABK37830.1"/>
    <property type="molecule type" value="Genomic_DNA"/>
</dbReference>
<dbReference type="RefSeq" id="WP_010672559.1">
    <property type="nucleotide sequence ID" value="NC_008570.1"/>
</dbReference>
<dbReference type="RefSeq" id="YP_854839.1">
    <property type="nucleotide sequence ID" value="NC_008570.1"/>
</dbReference>
<dbReference type="SMR" id="A0KF21"/>
<dbReference type="STRING" id="380703.AHA_0309"/>
<dbReference type="EnsemblBacteria" id="ABK37830">
    <property type="protein sequence ID" value="ABK37830"/>
    <property type="gene ID" value="AHA_0309"/>
</dbReference>
<dbReference type="GeneID" id="48824278"/>
<dbReference type="KEGG" id="aha:AHA_0309"/>
<dbReference type="PATRIC" id="fig|380703.7.peg.298"/>
<dbReference type="eggNOG" id="COG0087">
    <property type="taxonomic scope" value="Bacteria"/>
</dbReference>
<dbReference type="HOGENOM" id="CLU_044142_4_1_6"/>
<dbReference type="OrthoDB" id="9806135at2"/>
<dbReference type="Proteomes" id="UP000000756">
    <property type="component" value="Chromosome"/>
</dbReference>
<dbReference type="GO" id="GO:0022625">
    <property type="term" value="C:cytosolic large ribosomal subunit"/>
    <property type="evidence" value="ECO:0007669"/>
    <property type="project" value="TreeGrafter"/>
</dbReference>
<dbReference type="GO" id="GO:0019843">
    <property type="term" value="F:rRNA binding"/>
    <property type="evidence" value="ECO:0007669"/>
    <property type="project" value="UniProtKB-UniRule"/>
</dbReference>
<dbReference type="GO" id="GO:0003735">
    <property type="term" value="F:structural constituent of ribosome"/>
    <property type="evidence" value="ECO:0007669"/>
    <property type="project" value="InterPro"/>
</dbReference>
<dbReference type="GO" id="GO:0006412">
    <property type="term" value="P:translation"/>
    <property type="evidence" value="ECO:0007669"/>
    <property type="project" value="UniProtKB-UniRule"/>
</dbReference>
<dbReference type="FunFam" id="2.40.30.10:FF:000004">
    <property type="entry name" value="50S ribosomal protein L3"/>
    <property type="match status" value="1"/>
</dbReference>
<dbReference type="FunFam" id="3.30.160.810:FF:000001">
    <property type="entry name" value="50S ribosomal protein L3"/>
    <property type="match status" value="1"/>
</dbReference>
<dbReference type="Gene3D" id="3.30.160.810">
    <property type="match status" value="1"/>
</dbReference>
<dbReference type="Gene3D" id="2.40.30.10">
    <property type="entry name" value="Translation factors"/>
    <property type="match status" value="1"/>
</dbReference>
<dbReference type="HAMAP" id="MF_01325_B">
    <property type="entry name" value="Ribosomal_uL3_B"/>
    <property type="match status" value="1"/>
</dbReference>
<dbReference type="InterPro" id="IPR000597">
    <property type="entry name" value="Ribosomal_uL3"/>
</dbReference>
<dbReference type="InterPro" id="IPR019927">
    <property type="entry name" value="Ribosomal_uL3_bac/org-type"/>
</dbReference>
<dbReference type="InterPro" id="IPR019926">
    <property type="entry name" value="Ribosomal_uL3_CS"/>
</dbReference>
<dbReference type="InterPro" id="IPR009000">
    <property type="entry name" value="Transl_B-barrel_sf"/>
</dbReference>
<dbReference type="NCBIfam" id="TIGR03625">
    <property type="entry name" value="L3_bact"/>
    <property type="match status" value="1"/>
</dbReference>
<dbReference type="PANTHER" id="PTHR11229">
    <property type="entry name" value="50S RIBOSOMAL PROTEIN L3"/>
    <property type="match status" value="1"/>
</dbReference>
<dbReference type="PANTHER" id="PTHR11229:SF16">
    <property type="entry name" value="LARGE RIBOSOMAL SUBUNIT PROTEIN UL3C"/>
    <property type="match status" value="1"/>
</dbReference>
<dbReference type="Pfam" id="PF00297">
    <property type="entry name" value="Ribosomal_L3"/>
    <property type="match status" value="1"/>
</dbReference>
<dbReference type="SUPFAM" id="SSF50447">
    <property type="entry name" value="Translation proteins"/>
    <property type="match status" value="1"/>
</dbReference>
<dbReference type="PROSITE" id="PS00474">
    <property type="entry name" value="RIBOSOMAL_L3"/>
    <property type="match status" value="1"/>
</dbReference>
<feature type="chain" id="PRO_1000052003" description="Large ribosomal subunit protein uL3">
    <location>
        <begin position="1"/>
        <end position="210"/>
    </location>
</feature>
<feature type="modified residue" description="N5-methylglutamine" evidence="1">
    <location>
        <position position="151"/>
    </location>
</feature>
<reference key="1">
    <citation type="journal article" date="2006" name="J. Bacteriol.">
        <title>Genome sequence of Aeromonas hydrophila ATCC 7966T: jack of all trades.</title>
        <authorList>
            <person name="Seshadri R."/>
            <person name="Joseph S.W."/>
            <person name="Chopra A.K."/>
            <person name="Sha J."/>
            <person name="Shaw J."/>
            <person name="Graf J."/>
            <person name="Haft D.H."/>
            <person name="Wu M."/>
            <person name="Ren Q."/>
            <person name="Rosovitz M.J."/>
            <person name="Madupu R."/>
            <person name="Tallon L."/>
            <person name="Kim M."/>
            <person name="Jin S."/>
            <person name="Vuong H."/>
            <person name="Stine O.C."/>
            <person name="Ali A."/>
            <person name="Horneman A.J."/>
            <person name="Heidelberg J.F."/>
        </authorList>
    </citation>
    <scope>NUCLEOTIDE SEQUENCE [LARGE SCALE GENOMIC DNA]</scope>
    <source>
        <strain>ATCC 7966 / DSM 30187 / BCRC 13018 / CCUG 14551 / JCM 1027 / KCTC 2358 / NCIMB 9240 / NCTC 8049</strain>
    </source>
</reference>
<comment type="function">
    <text evidence="1">One of the primary rRNA binding proteins, it binds directly near the 3'-end of the 23S rRNA, where it nucleates assembly of the 50S subunit.</text>
</comment>
<comment type="subunit">
    <text evidence="1">Part of the 50S ribosomal subunit. Forms a cluster with proteins L14 and L19.</text>
</comment>
<comment type="PTM">
    <text evidence="1">Methylated by PrmB.</text>
</comment>
<comment type="similarity">
    <text evidence="1">Belongs to the universal ribosomal protein uL3 family.</text>
</comment>
<evidence type="ECO:0000255" key="1">
    <source>
        <dbReference type="HAMAP-Rule" id="MF_01325"/>
    </source>
</evidence>
<evidence type="ECO:0000305" key="2"/>
<proteinExistence type="inferred from homology"/>
<name>RL3_AERHH</name>
<organism>
    <name type="scientific">Aeromonas hydrophila subsp. hydrophila (strain ATCC 7966 / DSM 30187 / BCRC 13018 / CCUG 14551 / JCM 1027 / KCTC 2358 / NCIMB 9240 / NCTC 8049)</name>
    <dbReference type="NCBI Taxonomy" id="380703"/>
    <lineage>
        <taxon>Bacteria</taxon>
        <taxon>Pseudomonadati</taxon>
        <taxon>Pseudomonadota</taxon>
        <taxon>Gammaproteobacteria</taxon>
        <taxon>Aeromonadales</taxon>
        <taxon>Aeromonadaceae</taxon>
        <taxon>Aeromonas</taxon>
    </lineage>
</organism>